<reference key="1">
    <citation type="journal article" date="2004" name="Curr. Genet.">
        <title>Structural features and transcript-editing analysis of sugarcane (Saccharum officinarum L.) chloroplast genome.</title>
        <authorList>
            <person name="Calsa T. Jr."/>
            <person name="Carraro D.M."/>
            <person name="Benatti M.R."/>
            <person name="Barbosa A.C."/>
            <person name="Kitajima J.P."/>
            <person name="Carrer H."/>
        </authorList>
    </citation>
    <scope>NUCLEOTIDE SEQUENCE [LARGE SCALE GENOMIC DNA]</scope>
    <source>
        <strain>cv. SP-80-3280</strain>
    </source>
</reference>
<feature type="chain" id="PRO_0000207946" description="Protein PsbN">
    <location>
        <begin position="1"/>
        <end position="43"/>
    </location>
</feature>
<feature type="transmembrane region" description="Helical" evidence="1">
    <location>
        <begin position="5"/>
        <end position="27"/>
    </location>
</feature>
<protein>
    <recommendedName>
        <fullName evidence="1">Protein PsbN</fullName>
    </recommendedName>
</protein>
<name>PSBN_SACHY</name>
<evidence type="ECO:0000255" key="1">
    <source>
        <dbReference type="HAMAP-Rule" id="MF_00293"/>
    </source>
</evidence>
<organism>
    <name type="scientific">Saccharum hybrid</name>
    <name type="common">Sugarcane</name>
    <dbReference type="NCBI Taxonomy" id="15819"/>
    <lineage>
        <taxon>Eukaryota</taxon>
        <taxon>Viridiplantae</taxon>
        <taxon>Streptophyta</taxon>
        <taxon>Embryophyta</taxon>
        <taxon>Tracheophyta</taxon>
        <taxon>Spermatophyta</taxon>
        <taxon>Magnoliopsida</taxon>
        <taxon>Liliopsida</taxon>
        <taxon>Poales</taxon>
        <taxon>Poaceae</taxon>
        <taxon>PACMAD clade</taxon>
        <taxon>Panicoideae</taxon>
        <taxon>Andropogonodae</taxon>
        <taxon>Andropogoneae</taxon>
        <taxon>Saccharinae</taxon>
        <taxon>Saccharum</taxon>
    </lineage>
</organism>
<geneLocation type="chloroplast"/>
<dbReference type="EMBL" id="AE009947">
    <property type="protein sequence ID" value="AAT44719.1"/>
    <property type="molecule type" value="Genomic_DNA"/>
</dbReference>
<dbReference type="SMR" id="Q6L374"/>
<dbReference type="GO" id="GO:0009535">
    <property type="term" value="C:chloroplast thylakoid membrane"/>
    <property type="evidence" value="ECO:0007669"/>
    <property type="project" value="UniProtKB-SubCell"/>
</dbReference>
<dbReference type="GO" id="GO:0015979">
    <property type="term" value="P:photosynthesis"/>
    <property type="evidence" value="ECO:0007669"/>
    <property type="project" value="InterPro"/>
</dbReference>
<dbReference type="HAMAP" id="MF_00293">
    <property type="entry name" value="PSII_PsbN"/>
    <property type="match status" value="1"/>
</dbReference>
<dbReference type="InterPro" id="IPR003398">
    <property type="entry name" value="PSII_PsbN"/>
</dbReference>
<dbReference type="PANTHER" id="PTHR35326">
    <property type="entry name" value="PROTEIN PSBN"/>
    <property type="match status" value="1"/>
</dbReference>
<dbReference type="PANTHER" id="PTHR35326:SF3">
    <property type="entry name" value="PROTEIN PSBN"/>
    <property type="match status" value="1"/>
</dbReference>
<dbReference type="Pfam" id="PF02468">
    <property type="entry name" value="PsbN"/>
    <property type="match status" value="1"/>
</dbReference>
<sequence length="43" mass="4662">METATLVAISISGLLVSFTGYALYTAFGQPSQQLRDPFEEHGD</sequence>
<proteinExistence type="inferred from homology"/>
<gene>
    <name evidence="1" type="primary">psbN</name>
    <name type="ordered locus">PS153</name>
</gene>
<comment type="function">
    <text evidence="1">May play a role in photosystem I and II biogenesis.</text>
</comment>
<comment type="subcellular location">
    <subcellularLocation>
        <location evidence="1">Plastid</location>
        <location evidence="1">Chloroplast thylakoid membrane</location>
        <topology evidence="1">Single-pass membrane protein</topology>
    </subcellularLocation>
</comment>
<comment type="similarity">
    <text evidence="1">Belongs to the PsbN family.</text>
</comment>
<comment type="caution">
    <text evidence="1">Originally thought to be a component of PSII; based on experiments in Synechocystis, N.tabacum and barley, and its absence from PSII in T.elongatus and T.vulcanus, this is probably not true.</text>
</comment>
<accession>Q6L374</accession>
<keyword id="KW-0150">Chloroplast</keyword>
<keyword id="KW-0472">Membrane</keyword>
<keyword id="KW-0934">Plastid</keyword>
<keyword id="KW-0793">Thylakoid</keyword>
<keyword id="KW-0812">Transmembrane</keyword>
<keyword id="KW-1133">Transmembrane helix</keyword>